<name>METXS_MARMS</name>
<sequence>MPDVIPADSVGIVTPQIAQFDTPLALSCGQSLSSYQLIYETYGTLNQSASNAILICHALSGDHHAAGYHAMSDSKPGWWDTAIGPGKAIDTNKFFVIALNNLGGCCGSTGPTSINPETGQRWEASFPIVTVEDWVESQARLADLLGIQTFAAIVGGSLGGMQVLEWSIRFPTRLQSAVIVASAPKLSTQNIAFNEVARQSIRRDPDFFDGNYIDNNSVPTNGLGLARMLGHITYLSDDAMGAKFGRQMRHDSYQYNYGIEFEVESYLRYQGEAFTKRFDANTYMLMTKALDYFDPASQTNGDLSAVLSRAQCEFLLVSFTTDWRFSPERSEEIVNALVKAGKSVSYAKIEATEGHDAFLFPIPRYMTVLNTFLTRVANRLTTEIK</sequence>
<reference key="1">
    <citation type="submission" date="2007-06" db="EMBL/GenBank/DDBJ databases">
        <title>Complete sequence of Marinomonas sp. MWYL1.</title>
        <authorList>
            <consortium name="US DOE Joint Genome Institute"/>
            <person name="Copeland A."/>
            <person name="Lucas S."/>
            <person name="Lapidus A."/>
            <person name="Barry K."/>
            <person name="Glavina del Rio T."/>
            <person name="Dalin E."/>
            <person name="Tice H."/>
            <person name="Pitluck S."/>
            <person name="Kiss H."/>
            <person name="Brettin T."/>
            <person name="Bruce D."/>
            <person name="Detter J.C."/>
            <person name="Han C."/>
            <person name="Schmutz J."/>
            <person name="Larimer F."/>
            <person name="Land M."/>
            <person name="Hauser L."/>
            <person name="Kyrpides N."/>
            <person name="Kim E."/>
            <person name="Johnston A.W.B."/>
            <person name="Todd J.D."/>
            <person name="Rogers R."/>
            <person name="Wexler M."/>
            <person name="Bond P.L."/>
            <person name="Li Y."/>
            <person name="Richardson P."/>
        </authorList>
    </citation>
    <scope>NUCLEOTIDE SEQUENCE [LARGE SCALE GENOMIC DNA]</scope>
    <source>
        <strain>MWYL1</strain>
    </source>
</reference>
<protein>
    <recommendedName>
        <fullName evidence="1">Homoserine O-succinyltransferase</fullName>
        <shortName evidence="1">HST</shortName>
        <ecNumber evidence="1">2.3.1.46</ecNumber>
    </recommendedName>
    <alternativeName>
        <fullName evidence="1">Homoserine transsuccinylase</fullName>
        <shortName evidence="1">HTS</shortName>
    </alternativeName>
</protein>
<feature type="chain" id="PRO_1000078944" description="Homoserine O-succinyltransferase">
    <location>
        <begin position="1"/>
        <end position="385"/>
    </location>
</feature>
<feature type="domain" description="AB hydrolase-1" evidence="1">
    <location>
        <begin position="51"/>
        <end position="359"/>
    </location>
</feature>
<feature type="active site" description="Nucleophile" evidence="1">
    <location>
        <position position="157"/>
    </location>
</feature>
<feature type="active site" evidence="1">
    <location>
        <position position="322"/>
    </location>
</feature>
<feature type="active site" evidence="1">
    <location>
        <position position="355"/>
    </location>
</feature>
<feature type="binding site" evidence="1">
    <location>
        <position position="227"/>
    </location>
    <ligand>
        <name>substrate</name>
    </ligand>
</feature>
<feature type="binding site" evidence="1">
    <location>
        <position position="356"/>
    </location>
    <ligand>
        <name>substrate</name>
    </ligand>
</feature>
<feature type="site" description="Important for acyl-CoA specificity" evidence="1">
    <location>
        <position position="324"/>
    </location>
</feature>
<accession>A6W3E8</accession>
<evidence type="ECO:0000255" key="1">
    <source>
        <dbReference type="HAMAP-Rule" id="MF_00296"/>
    </source>
</evidence>
<comment type="function">
    <text evidence="1">Transfers a succinyl group from succinyl-CoA to L-homoserine, forming succinyl-L-homoserine.</text>
</comment>
<comment type="catalytic activity">
    <reaction evidence="1">
        <text>L-homoserine + succinyl-CoA = O-succinyl-L-homoserine + CoA</text>
        <dbReference type="Rhea" id="RHEA:22008"/>
        <dbReference type="ChEBI" id="CHEBI:57287"/>
        <dbReference type="ChEBI" id="CHEBI:57292"/>
        <dbReference type="ChEBI" id="CHEBI:57476"/>
        <dbReference type="ChEBI" id="CHEBI:57661"/>
        <dbReference type="EC" id="2.3.1.46"/>
    </reaction>
</comment>
<comment type="pathway">
    <text evidence="1">Amino-acid biosynthesis; L-methionine biosynthesis via de novo pathway; O-succinyl-L-homoserine from L-homoserine: step 1/1.</text>
</comment>
<comment type="subunit">
    <text evidence="1">Homodimer.</text>
</comment>
<comment type="subcellular location">
    <subcellularLocation>
        <location evidence="1">Cytoplasm</location>
    </subcellularLocation>
</comment>
<comment type="similarity">
    <text evidence="1">Belongs to the AB hydrolase superfamily. MetX family.</text>
</comment>
<proteinExistence type="inferred from homology"/>
<organism>
    <name type="scientific">Marinomonas sp. (strain MWYL1)</name>
    <dbReference type="NCBI Taxonomy" id="400668"/>
    <lineage>
        <taxon>Bacteria</taxon>
        <taxon>Pseudomonadati</taxon>
        <taxon>Pseudomonadota</taxon>
        <taxon>Gammaproteobacteria</taxon>
        <taxon>Oceanospirillales</taxon>
        <taxon>Oceanospirillaceae</taxon>
        <taxon>Marinomonas</taxon>
    </lineage>
</organism>
<dbReference type="EC" id="2.3.1.46" evidence="1"/>
<dbReference type="EMBL" id="CP000749">
    <property type="protein sequence ID" value="ABR73227.1"/>
    <property type="molecule type" value="Genomic_DNA"/>
</dbReference>
<dbReference type="SMR" id="A6W3E8"/>
<dbReference type="STRING" id="400668.Mmwyl1_4332"/>
<dbReference type="ESTHER" id="marms-metx">
    <property type="family name" value="Homoserine_transacetylase"/>
</dbReference>
<dbReference type="KEGG" id="mmw:Mmwyl1_4332"/>
<dbReference type="eggNOG" id="COG2021">
    <property type="taxonomic scope" value="Bacteria"/>
</dbReference>
<dbReference type="HOGENOM" id="CLU_028760_1_2_6"/>
<dbReference type="OrthoDB" id="9800754at2"/>
<dbReference type="UniPathway" id="UPA00051">
    <property type="reaction ID" value="UER00075"/>
</dbReference>
<dbReference type="GO" id="GO:0005737">
    <property type="term" value="C:cytoplasm"/>
    <property type="evidence" value="ECO:0007669"/>
    <property type="project" value="UniProtKB-SubCell"/>
</dbReference>
<dbReference type="GO" id="GO:0004414">
    <property type="term" value="F:homoserine O-acetyltransferase activity"/>
    <property type="evidence" value="ECO:0007669"/>
    <property type="project" value="TreeGrafter"/>
</dbReference>
<dbReference type="GO" id="GO:0008899">
    <property type="term" value="F:homoserine O-succinyltransferase activity"/>
    <property type="evidence" value="ECO:0007669"/>
    <property type="project" value="UniProtKB-UniRule"/>
</dbReference>
<dbReference type="GO" id="GO:0009092">
    <property type="term" value="P:homoserine metabolic process"/>
    <property type="evidence" value="ECO:0007669"/>
    <property type="project" value="TreeGrafter"/>
</dbReference>
<dbReference type="GO" id="GO:0009086">
    <property type="term" value="P:methionine biosynthetic process"/>
    <property type="evidence" value="ECO:0007669"/>
    <property type="project" value="UniProtKB-UniRule"/>
</dbReference>
<dbReference type="FunFam" id="1.10.1740.110:FF:000001">
    <property type="entry name" value="Homoserine O-acetyltransferase"/>
    <property type="match status" value="1"/>
</dbReference>
<dbReference type="Gene3D" id="1.10.1740.110">
    <property type="match status" value="1"/>
</dbReference>
<dbReference type="Gene3D" id="3.40.50.1820">
    <property type="entry name" value="alpha/beta hydrolase"/>
    <property type="match status" value="1"/>
</dbReference>
<dbReference type="HAMAP" id="MF_00296">
    <property type="entry name" value="MetX_acyltransf"/>
    <property type="match status" value="1"/>
</dbReference>
<dbReference type="InterPro" id="IPR000073">
    <property type="entry name" value="AB_hydrolase_1"/>
</dbReference>
<dbReference type="InterPro" id="IPR029058">
    <property type="entry name" value="AB_hydrolase_fold"/>
</dbReference>
<dbReference type="InterPro" id="IPR008220">
    <property type="entry name" value="HAT_MetX-like"/>
</dbReference>
<dbReference type="NCBIfam" id="TIGR01392">
    <property type="entry name" value="homoserO_Ac_trn"/>
    <property type="match status" value="1"/>
</dbReference>
<dbReference type="NCBIfam" id="NF001209">
    <property type="entry name" value="PRK00175.1"/>
    <property type="match status" value="1"/>
</dbReference>
<dbReference type="PANTHER" id="PTHR32268">
    <property type="entry name" value="HOMOSERINE O-ACETYLTRANSFERASE"/>
    <property type="match status" value="1"/>
</dbReference>
<dbReference type="PANTHER" id="PTHR32268:SF11">
    <property type="entry name" value="HOMOSERINE O-ACETYLTRANSFERASE"/>
    <property type="match status" value="1"/>
</dbReference>
<dbReference type="Pfam" id="PF00561">
    <property type="entry name" value="Abhydrolase_1"/>
    <property type="match status" value="1"/>
</dbReference>
<dbReference type="PIRSF" id="PIRSF000443">
    <property type="entry name" value="Homoser_Ac_trans"/>
    <property type="match status" value="1"/>
</dbReference>
<dbReference type="SUPFAM" id="SSF53474">
    <property type="entry name" value="alpha/beta-Hydrolases"/>
    <property type="match status" value="1"/>
</dbReference>
<keyword id="KW-0012">Acyltransferase</keyword>
<keyword id="KW-0028">Amino-acid biosynthesis</keyword>
<keyword id="KW-0963">Cytoplasm</keyword>
<keyword id="KW-0486">Methionine biosynthesis</keyword>
<keyword id="KW-0808">Transferase</keyword>
<gene>
    <name evidence="1" type="primary">metXS</name>
    <name type="ordered locus">Mmwyl1_4332</name>
</gene>